<comment type="function">
    <text evidence="1">Catalyzes the reversible conversion of 3-phosphohydroxypyruvate to phosphoserine and of 3-hydroxy-2-oxo-4-phosphonooxybutanoate to phosphohydroxythreonine.</text>
</comment>
<comment type="catalytic activity">
    <reaction evidence="1">
        <text>O-phospho-L-serine + 2-oxoglutarate = 3-phosphooxypyruvate + L-glutamate</text>
        <dbReference type="Rhea" id="RHEA:14329"/>
        <dbReference type="ChEBI" id="CHEBI:16810"/>
        <dbReference type="ChEBI" id="CHEBI:18110"/>
        <dbReference type="ChEBI" id="CHEBI:29985"/>
        <dbReference type="ChEBI" id="CHEBI:57524"/>
        <dbReference type="EC" id="2.6.1.52"/>
    </reaction>
</comment>
<comment type="catalytic activity">
    <reaction evidence="1">
        <text>4-(phosphooxy)-L-threonine + 2-oxoglutarate = (R)-3-hydroxy-2-oxo-4-phosphooxybutanoate + L-glutamate</text>
        <dbReference type="Rhea" id="RHEA:16573"/>
        <dbReference type="ChEBI" id="CHEBI:16810"/>
        <dbReference type="ChEBI" id="CHEBI:29985"/>
        <dbReference type="ChEBI" id="CHEBI:58452"/>
        <dbReference type="ChEBI" id="CHEBI:58538"/>
        <dbReference type="EC" id="2.6.1.52"/>
    </reaction>
</comment>
<comment type="cofactor">
    <cofactor evidence="1">
        <name>pyridoxal 5'-phosphate</name>
        <dbReference type="ChEBI" id="CHEBI:597326"/>
    </cofactor>
    <text evidence="1">Binds 1 pyridoxal phosphate per subunit.</text>
</comment>
<comment type="pathway">
    <text evidence="1">Amino-acid biosynthesis; L-serine biosynthesis; L-serine from 3-phospho-D-glycerate: step 2/3.</text>
</comment>
<comment type="pathway">
    <text evidence="1">Cofactor biosynthesis; pyridoxine 5'-phosphate biosynthesis; pyridoxine 5'-phosphate from D-erythrose 4-phosphate: step 3/5.</text>
</comment>
<comment type="subunit">
    <text evidence="1">Homodimer.</text>
</comment>
<comment type="subcellular location">
    <subcellularLocation>
        <location evidence="1">Cytoplasm</location>
    </subcellularLocation>
</comment>
<comment type="similarity">
    <text evidence="1">Belongs to the class-V pyridoxal-phosphate-dependent aminotransferase family. SerC subfamily.</text>
</comment>
<gene>
    <name evidence="1" type="primary">serC</name>
    <name type="ordered locus">DNO_0670</name>
</gene>
<proteinExistence type="inferred from homology"/>
<feature type="chain" id="PRO_1000058210" description="Phosphoserine aminotransferase">
    <location>
        <begin position="1"/>
        <end position="358"/>
    </location>
</feature>
<feature type="binding site" evidence="1">
    <location>
        <position position="43"/>
    </location>
    <ligand>
        <name>L-glutamate</name>
        <dbReference type="ChEBI" id="CHEBI:29985"/>
    </ligand>
</feature>
<feature type="binding site" evidence="1">
    <location>
        <position position="103"/>
    </location>
    <ligand>
        <name>pyridoxal 5'-phosphate</name>
        <dbReference type="ChEBI" id="CHEBI:597326"/>
    </ligand>
</feature>
<feature type="binding site" evidence="1">
    <location>
        <position position="153"/>
    </location>
    <ligand>
        <name>pyridoxal 5'-phosphate</name>
        <dbReference type="ChEBI" id="CHEBI:597326"/>
    </ligand>
</feature>
<feature type="binding site" evidence="1">
    <location>
        <position position="172"/>
    </location>
    <ligand>
        <name>pyridoxal 5'-phosphate</name>
        <dbReference type="ChEBI" id="CHEBI:597326"/>
    </ligand>
</feature>
<feature type="binding site" evidence="1">
    <location>
        <position position="195"/>
    </location>
    <ligand>
        <name>pyridoxal 5'-phosphate</name>
        <dbReference type="ChEBI" id="CHEBI:597326"/>
    </ligand>
</feature>
<feature type="binding site" evidence="1">
    <location>
        <begin position="236"/>
        <end position="237"/>
    </location>
    <ligand>
        <name>pyridoxal 5'-phosphate</name>
        <dbReference type="ChEBI" id="CHEBI:597326"/>
    </ligand>
</feature>
<feature type="modified residue" description="N6-(pyridoxal phosphate)lysine" evidence="1">
    <location>
        <position position="196"/>
    </location>
</feature>
<reference key="1">
    <citation type="journal article" date="2007" name="Nat. Biotechnol.">
        <title>Genome sequence and identification of candidate vaccine antigens from the animal pathogen Dichelobacter nodosus.</title>
        <authorList>
            <person name="Myers G.S.A."/>
            <person name="Parker D."/>
            <person name="Al-Hasani K."/>
            <person name="Kennan R.M."/>
            <person name="Seemann T."/>
            <person name="Ren Q."/>
            <person name="Badger J.H."/>
            <person name="Selengut J.D."/>
            <person name="Deboy R.T."/>
            <person name="Tettelin H."/>
            <person name="Boyce J.D."/>
            <person name="McCarl V.P."/>
            <person name="Han X."/>
            <person name="Nelson W.C."/>
            <person name="Madupu R."/>
            <person name="Mohamoud Y."/>
            <person name="Holley T."/>
            <person name="Fedorova N."/>
            <person name="Khouri H."/>
            <person name="Bottomley S.P."/>
            <person name="Whittington R.J."/>
            <person name="Adler B."/>
            <person name="Songer J.G."/>
            <person name="Rood J.I."/>
            <person name="Paulsen I.T."/>
        </authorList>
    </citation>
    <scope>NUCLEOTIDE SEQUENCE [LARGE SCALE GENOMIC DNA]</scope>
    <source>
        <strain>VCS1703A</strain>
    </source>
</reference>
<protein>
    <recommendedName>
        <fullName evidence="1">Phosphoserine aminotransferase</fullName>
        <ecNumber evidence="1">2.6.1.52</ecNumber>
    </recommendedName>
    <alternativeName>
        <fullName evidence="1">Phosphohydroxythreonine aminotransferase</fullName>
        <shortName evidence="1">PSAT</shortName>
    </alternativeName>
</protein>
<evidence type="ECO:0000255" key="1">
    <source>
        <dbReference type="HAMAP-Rule" id="MF_00160"/>
    </source>
</evidence>
<sequence>MSKRVFNFYPGPCTLPLPVLQQAQKELLDFEGCGMSVMEISHRSQRFEAILAETLSLAKKLIGAPDDFCVLLIAGGAHQQFAMTALNLLADGGSAGIVNSGLWAKRALEEAQRVGKMVELWRAPDGKCTTLPDLKTLTVPKNLRYVHLTSNETVDGLQFPELPDLGVPLVLDVSSDYYTRPLPWDYCDIVYGGVQKNLAPSGMALVFVRKQCLREHTNLARFFCYKHHADANSLLNTPPTWQIYILHLVLKWIEQQGGVAHFAALAQKRSAKLYDFIDNNDFYRNDVEKKYRSKINVVMRTPSDALDTQFWQEAETHALVGLKGHSAVGGLRASLYNAMEMAGVEALIDFMHDFAQRH</sequence>
<keyword id="KW-0028">Amino-acid biosynthesis</keyword>
<keyword id="KW-0032">Aminotransferase</keyword>
<keyword id="KW-0963">Cytoplasm</keyword>
<keyword id="KW-0663">Pyridoxal phosphate</keyword>
<keyword id="KW-0664">Pyridoxine biosynthesis</keyword>
<keyword id="KW-1185">Reference proteome</keyword>
<keyword id="KW-0718">Serine biosynthesis</keyword>
<keyword id="KW-0808">Transferase</keyword>
<name>SERC_DICNV</name>
<accession>A5EV80</accession>
<dbReference type="EC" id="2.6.1.52" evidence="1"/>
<dbReference type="EMBL" id="CP000513">
    <property type="protein sequence ID" value="ABQ13312.1"/>
    <property type="molecule type" value="Genomic_DNA"/>
</dbReference>
<dbReference type="RefSeq" id="WP_012031003.1">
    <property type="nucleotide sequence ID" value="NC_009446.1"/>
</dbReference>
<dbReference type="SMR" id="A5EV80"/>
<dbReference type="STRING" id="246195.DNO_0670"/>
<dbReference type="KEGG" id="dno:DNO_0670"/>
<dbReference type="eggNOG" id="COG1932">
    <property type="taxonomic scope" value="Bacteria"/>
</dbReference>
<dbReference type="HOGENOM" id="CLU_034866_0_2_6"/>
<dbReference type="OrthoDB" id="9809412at2"/>
<dbReference type="UniPathway" id="UPA00135">
    <property type="reaction ID" value="UER00197"/>
</dbReference>
<dbReference type="UniPathway" id="UPA00244">
    <property type="reaction ID" value="UER00311"/>
</dbReference>
<dbReference type="Proteomes" id="UP000000248">
    <property type="component" value="Chromosome"/>
</dbReference>
<dbReference type="GO" id="GO:0005737">
    <property type="term" value="C:cytoplasm"/>
    <property type="evidence" value="ECO:0007669"/>
    <property type="project" value="UniProtKB-SubCell"/>
</dbReference>
<dbReference type="GO" id="GO:0004648">
    <property type="term" value="F:O-phospho-L-serine:2-oxoglutarate aminotransferase activity"/>
    <property type="evidence" value="ECO:0007669"/>
    <property type="project" value="UniProtKB-UniRule"/>
</dbReference>
<dbReference type="GO" id="GO:0030170">
    <property type="term" value="F:pyridoxal phosphate binding"/>
    <property type="evidence" value="ECO:0007669"/>
    <property type="project" value="UniProtKB-UniRule"/>
</dbReference>
<dbReference type="GO" id="GO:0006564">
    <property type="term" value="P:L-serine biosynthetic process"/>
    <property type="evidence" value="ECO:0007669"/>
    <property type="project" value="UniProtKB-UniRule"/>
</dbReference>
<dbReference type="GO" id="GO:0008615">
    <property type="term" value="P:pyridoxine biosynthetic process"/>
    <property type="evidence" value="ECO:0007669"/>
    <property type="project" value="UniProtKB-UniRule"/>
</dbReference>
<dbReference type="FunFam" id="3.40.640.10:FF:000010">
    <property type="entry name" value="Phosphoserine aminotransferase"/>
    <property type="match status" value="1"/>
</dbReference>
<dbReference type="FunFam" id="3.90.1150.10:FF:000006">
    <property type="entry name" value="Phosphoserine aminotransferase"/>
    <property type="match status" value="1"/>
</dbReference>
<dbReference type="Gene3D" id="3.90.1150.10">
    <property type="entry name" value="Aspartate Aminotransferase, domain 1"/>
    <property type="match status" value="1"/>
</dbReference>
<dbReference type="Gene3D" id="3.40.640.10">
    <property type="entry name" value="Type I PLP-dependent aspartate aminotransferase-like (Major domain)"/>
    <property type="match status" value="1"/>
</dbReference>
<dbReference type="HAMAP" id="MF_00160">
    <property type="entry name" value="SerC_aminotrans_5"/>
    <property type="match status" value="1"/>
</dbReference>
<dbReference type="InterPro" id="IPR000192">
    <property type="entry name" value="Aminotrans_V_dom"/>
</dbReference>
<dbReference type="InterPro" id="IPR022278">
    <property type="entry name" value="Pser_aminoTfrase"/>
</dbReference>
<dbReference type="InterPro" id="IPR015424">
    <property type="entry name" value="PyrdxlP-dep_Trfase"/>
</dbReference>
<dbReference type="InterPro" id="IPR015421">
    <property type="entry name" value="PyrdxlP-dep_Trfase_major"/>
</dbReference>
<dbReference type="InterPro" id="IPR015422">
    <property type="entry name" value="PyrdxlP-dep_Trfase_small"/>
</dbReference>
<dbReference type="NCBIfam" id="NF003764">
    <property type="entry name" value="PRK05355.1"/>
    <property type="match status" value="1"/>
</dbReference>
<dbReference type="PANTHER" id="PTHR43247">
    <property type="entry name" value="PHOSPHOSERINE AMINOTRANSFERASE"/>
    <property type="match status" value="1"/>
</dbReference>
<dbReference type="PANTHER" id="PTHR43247:SF1">
    <property type="entry name" value="PHOSPHOSERINE AMINOTRANSFERASE"/>
    <property type="match status" value="1"/>
</dbReference>
<dbReference type="Pfam" id="PF00266">
    <property type="entry name" value="Aminotran_5"/>
    <property type="match status" value="1"/>
</dbReference>
<dbReference type="PIRSF" id="PIRSF000525">
    <property type="entry name" value="SerC"/>
    <property type="match status" value="1"/>
</dbReference>
<dbReference type="SUPFAM" id="SSF53383">
    <property type="entry name" value="PLP-dependent transferases"/>
    <property type="match status" value="1"/>
</dbReference>
<organism>
    <name type="scientific">Dichelobacter nodosus (strain VCS1703A)</name>
    <dbReference type="NCBI Taxonomy" id="246195"/>
    <lineage>
        <taxon>Bacteria</taxon>
        <taxon>Pseudomonadati</taxon>
        <taxon>Pseudomonadota</taxon>
        <taxon>Gammaproteobacteria</taxon>
        <taxon>Cardiobacteriales</taxon>
        <taxon>Cardiobacteriaceae</taxon>
        <taxon>Dichelobacter</taxon>
    </lineage>
</organism>